<reference key="1">
    <citation type="journal article" date="1994" name="Plant Physiol.">
        <title>Cloning and sequencing of a pea cDNA fragment coding for thioredoxin m.</title>
        <authorList>
            <person name="Lopez Jaramillo J."/>
            <person name="Chueca A."/>
            <person name="Sahrawy M."/>
            <person name="Hermoso R."/>
            <person name="Lazaro J.J."/>
            <person name="Prado F.E."/>
            <person name="Lopez Gorge J."/>
        </authorList>
    </citation>
    <scope>NUCLEOTIDE SEQUENCE [MRNA]</scope>
    <source>
        <tissue>Green leaf</tissue>
    </source>
</reference>
<reference key="2">
    <citation type="journal article" date="1996" name="J. Mol. Evol.">
        <title>Intron position as an evolutionary marker of thioredoxins and thioredoxin domains.</title>
        <authorList>
            <person name="Sahrawy M."/>
            <person name="Hecht V."/>
            <person name="Lopez Jaramillo J."/>
            <person name="Chueca A."/>
            <person name="Chartier Y."/>
            <person name="Meyer Y."/>
        </authorList>
    </citation>
    <scope>NUCLEOTIDE SEQUENCE [GENOMIC DNA]</scope>
</reference>
<comment type="function">
    <text evidence="1">Participates in various redox reactions through the reversible oxidation of the active center dithiol to a disulfide. The M form is known to activate NADP-malate dehydrogenase (By similarity).</text>
</comment>
<comment type="subunit">
    <text evidence="1">Forms a complex with heterodimeric ferredoxin-thioredoxin reductase (FTR) and ferredoxin.</text>
</comment>
<comment type="subcellular location">
    <subcellularLocation>
        <location evidence="1">Plastid</location>
        <location evidence="1">Chloroplast</location>
    </subcellularLocation>
</comment>
<comment type="similarity">
    <text evidence="4">Belongs to the thioredoxin family. Plant M-type subfamily.</text>
</comment>
<accession>P48384</accession>
<accession>Q40992</accession>
<organism>
    <name type="scientific">Pisum sativum</name>
    <name type="common">Garden pea</name>
    <name type="synonym">Lathyrus oleraceus</name>
    <dbReference type="NCBI Taxonomy" id="3888"/>
    <lineage>
        <taxon>Eukaryota</taxon>
        <taxon>Viridiplantae</taxon>
        <taxon>Streptophyta</taxon>
        <taxon>Embryophyta</taxon>
        <taxon>Tracheophyta</taxon>
        <taxon>Spermatophyta</taxon>
        <taxon>Magnoliopsida</taxon>
        <taxon>eudicotyledons</taxon>
        <taxon>Gunneridae</taxon>
        <taxon>Pentapetalae</taxon>
        <taxon>rosids</taxon>
        <taxon>fabids</taxon>
        <taxon>Fabales</taxon>
        <taxon>Fabaceae</taxon>
        <taxon>Papilionoideae</taxon>
        <taxon>50 kb inversion clade</taxon>
        <taxon>NPAAA clade</taxon>
        <taxon>Hologalegina</taxon>
        <taxon>IRL clade</taxon>
        <taxon>Fabeae</taxon>
        <taxon>Pisum</taxon>
    </lineage>
</organism>
<protein>
    <recommendedName>
        <fullName>Thioredoxin M-type, chloroplastic</fullName>
        <shortName>Trx-M</shortName>
    </recommendedName>
</protein>
<sequence>MALESLFKSIHTKTSLSSSIVFIFKGKACLLTSKSRIQESFAELNSFTSLVLLIENHVLLHAREAVNEVQVVNDSSWDELVIGSETPVLVDFWAPWCGPCRMIAPIIDELAKEYAGKIKCYKLNTDESPNTATKYGIRSIPTVLFFKNGERKDSVIGAVPKATLSEKVEKYI</sequence>
<keyword id="KW-0002">3D-structure</keyword>
<keyword id="KW-0150">Chloroplast</keyword>
<keyword id="KW-1015">Disulfide bond</keyword>
<keyword id="KW-0249">Electron transport</keyword>
<keyword id="KW-0934">Plastid</keyword>
<keyword id="KW-0676">Redox-active center</keyword>
<keyword id="KW-0809">Transit peptide</keyword>
<keyword id="KW-0813">Transport</keyword>
<name>TRXM_PEA</name>
<dbReference type="EMBL" id="X76269">
    <property type="protein sequence ID" value="CAA53900.1"/>
    <property type="molecule type" value="mRNA"/>
</dbReference>
<dbReference type="EMBL" id="U35831">
    <property type="protein sequence ID" value="AAC49358.1"/>
    <property type="molecule type" value="Genomic_DNA"/>
</dbReference>
<dbReference type="PIR" id="S38909">
    <property type="entry name" value="S38909"/>
</dbReference>
<dbReference type="PDB" id="8QPD">
    <property type="method" value="NMR"/>
    <property type="chains" value="A=65-172"/>
</dbReference>
<dbReference type="PDBsum" id="8QPD"/>
<dbReference type="SMR" id="P48384"/>
<dbReference type="GO" id="GO:0009507">
    <property type="term" value="C:chloroplast"/>
    <property type="evidence" value="ECO:0007669"/>
    <property type="project" value="UniProtKB-SubCell"/>
</dbReference>
<dbReference type="GO" id="GO:0008047">
    <property type="term" value="F:enzyme activator activity"/>
    <property type="evidence" value="ECO:0007669"/>
    <property type="project" value="UniProtKB-ARBA"/>
</dbReference>
<dbReference type="GO" id="GO:0015035">
    <property type="term" value="F:protein-disulfide reductase activity"/>
    <property type="evidence" value="ECO:0007669"/>
    <property type="project" value="InterPro"/>
</dbReference>
<dbReference type="CDD" id="cd02947">
    <property type="entry name" value="TRX_family"/>
    <property type="match status" value="1"/>
</dbReference>
<dbReference type="FunFam" id="3.40.30.10:FF:000001">
    <property type="entry name" value="Thioredoxin"/>
    <property type="match status" value="1"/>
</dbReference>
<dbReference type="Gene3D" id="3.40.30.10">
    <property type="entry name" value="Glutaredoxin"/>
    <property type="match status" value="1"/>
</dbReference>
<dbReference type="InterPro" id="IPR005746">
    <property type="entry name" value="Thioredoxin"/>
</dbReference>
<dbReference type="InterPro" id="IPR036249">
    <property type="entry name" value="Thioredoxin-like_sf"/>
</dbReference>
<dbReference type="InterPro" id="IPR017937">
    <property type="entry name" value="Thioredoxin_CS"/>
</dbReference>
<dbReference type="InterPro" id="IPR013766">
    <property type="entry name" value="Thioredoxin_domain"/>
</dbReference>
<dbReference type="NCBIfam" id="TIGR01068">
    <property type="entry name" value="thioredoxin"/>
    <property type="match status" value="1"/>
</dbReference>
<dbReference type="PANTHER" id="PTHR45663">
    <property type="entry name" value="GEO12009P1"/>
    <property type="match status" value="1"/>
</dbReference>
<dbReference type="PANTHER" id="PTHR45663:SF42">
    <property type="entry name" value="THIOREDOXIN M5, CHLOROPLASTIC"/>
    <property type="match status" value="1"/>
</dbReference>
<dbReference type="Pfam" id="PF00085">
    <property type="entry name" value="Thioredoxin"/>
    <property type="match status" value="1"/>
</dbReference>
<dbReference type="PRINTS" id="PR00421">
    <property type="entry name" value="THIOREDOXIN"/>
</dbReference>
<dbReference type="SUPFAM" id="SSF52833">
    <property type="entry name" value="Thioredoxin-like"/>
    <property type="match status" value="1"/>
</dbReference>
<dbReference type="PROSITE" id="PS00194">
    <property type="entry name" value="THIOREDOXIN_1"/>
    <property type="match status" value="1"/>
</dbReference>
<dbReference type="PROSITE" id="PS51352">
    <property type="entry name" value="THIOREDOXIN_2"/>
    <property type="match status" value="1"/>
</dbReference>
<evidence type="ECO:0000250" key="1"/>
<evidence type="ECO:0000255" key="2"/>
<evidence type="ECO:0000255" key="3">
    <source>
        <dbReference type="PROSITE-ProRule" id="PRU00691"/>
    </source>
</evidence>
<evidence type="ECO:0000305" key="4"/>
<evidence type="ECO:0007829" key="5">
    <source>
        <dbReference type="PDB" id="8QPD"/>
    </source>
</evidence>
<proteinExistence type="evidence at protein level"/>
<feature type="transit peptide" description="Chloroplast" evidence="2">
    <location>
        <begin position="1"/>
        <end position="60"/>
    </location>
</feature>
<feature type="chain" id="PRO_0000034177" description="Thioredoxin M-type, chloroplastic">
    <location>
        <begin position="61"/>
        <end position="172"/>
    </location>
</feature>
<feature type="domain" description="Thioredoxin" evidence="3">
    <location>
        <begin position="61"/>
        <end position="172"/>
    </location>
</feature>
<feature type="active site" description="Nucleophile" evidence="1">
    <location>
        <position position="97"/>
    </location>
</feature>
<feature type="active site" description="Nucleophile" evidence="1">
    <location>
        <position position="100"/>
    </location>
</feature>
<feature type="site" description="Deprotonates C-terminal active site Cys" evidence="1">
    <location>
        <position position="91"/>
    </location>
</feature>
<feature type="site" description="Contributes to redox potential value" evidence="1">
    <location>
        <position position="98"/>
    </location>
</feature>
<feature type="site" description="Contributes to redox potential value" evidence="1">
    <location>
        <position position="99"/>
    </location>
</feature>
<feature type="disulfide bond" description="Redox-active" evidence="3">
    <location>
        <begin position="97"/>
        <end position="100"/>
    </location>
</feature>
<feature type="sequence conflict" description="In Ref. 2; AAC49358." evidence="4" ref="2">
    <original>L</original>
    <variation>F</variation>
    <location>
        <position position="30"/>
    </location>
</feature>
<feature type="helix" evidence="5">
    <location>
        <begin position="75"/>
        <end position="79"/>
    </location>
</feature>
<feature type="turn" evidence="5">
    <location>
        <begin position="80"/>
        <end position="83"/>
    </location>
</feature>
<feature type="strand" evidence="5">
    <location>
        <begin position="88"/>
        <end position="91"/>
    </location>
</feature>
<feature type="strand" evidence="5">
    <location>
        <begin position="97"/>
        <end position="101"/>
    </location>
</feature>
<feature type="helix" evidence="5">
    <location>
        <begin position="105"/>
        <end position="113"/>
    </location>
</feature>
<feature type="strand" evidence="5">
    <location>
        <begin position="119"/>
        <end position="122"/>
    </location>
</feature>
<feature type="helix" evidence="5">
    <location>
        <begin position="129"/>
        <end position="133"/>
    </location>
</feature>
<feature type="strand" evidence="5">
    <location>
        <begin position="138"/>
        <end position="140"/>
    </location>
</feature>
<feature type="strand" evidence="5">
    <location>
        <begin position="143"/>
        <end position="150"/>
    </location>
</feature>
<feature type="strand" evidence="5">
    <location>
        <begin position="153"/>
        <end position="155"/>
    </location>
</feature>
<feature type="strand" evidence="5">
    <location>
        <begin position="157"/>
        <end position="159"/>
    </location>
</feature>
<feature type="helix" evidence="5">
    <location>
        <begin position="160"/>
        <end position="167"/>
    </location>
</feature>
<feature type="strand" evidence="5">
    <location>
        <begin position="168"/>
        <end position="170"/>
    </location>
</feature>